<keyword id="KW-0067">ATP-binding</keyword>
<keyword id="KW-0173">Coenzyme A biosynthesis</keyword>
<keyword id="KW-0963">Cytoplasm</keyword>
<keyword id="KW-0418">Kinase</keyword>
<keyword id="KW-0479">Metal-binding</keyword>
<keyword id="KW-0547">Nucleotide-binding</keyword>
<keyword id="KW-0630">Potassium</keyword>
<keyword id="KW-0808">Transferase</keyword>
<gene>
    <name evidence="1" type="primary">coaX</name>
    <name type="ordered locus">BVU_2565</name>
</gene>
<feature type="chain" id="PRO_1000054360" description="Type III pantothenate kinase">
    <location>
        <begin position="1"/>
        <end position="242"/>
    </location>
</feature>
<feature type="active site" description="Proton acceptor" evidence="1">
    <location>
        <position position="95"/>
    </location>
</feature>
<feature type="binding site" evidence="1">
    <location>
        <begin position="6"/>
        <end position="13"/>
    </location>
    <ligand>
        <name>ATP</name>
        <dbReference type="ChEBI" id="CHEBI:30616"/>
    </ligand>
</feature>
<feature type="binding site" evidence="1">
    <location>
        <position position="86"/>
    </location>
    <ligand>
        <name>substrate</name>
    </ligand>
</feature>
<feature type="binding site" evidence="1">
    <location>
        <begin position="93"/>
        <end position="96"/>
    </location>
    <ligand>
        <name>substrate</name>
    </ligand>
</feature>
<feature type="binding site" evidence="1">
    <location>
        <position position="116"/>
    </location>
    <ligand>
        <name>K(+)</name>
        <dbReference type="ChEBI" id="CHEBI:29103"/>
    </ligand>
</feature>
<feature type="binding site" evidence="1">
    <location>
        <position position="119"/>
    </location>
    <ligand>
        <name>ATP</name>
        <dbReference type="ChEBI" id="CHEBI:30616"/>
    </ligand>
</feature>
<feature type="binding site" evidence="1">
    <location>
        <position position="171"/>
    </location>
    <ligand>
        <name>substrate</name>
    </ligand>
</feature>
<protein>
    <recommendedName>
        <fullName evidence="1">Type III pantothenate kinase</fullName>
        <ecNumber evidence="1">2.7.1.33</ecNumber>
    </recommendedName>
    <alternativeName>
        <fullName evidence="1">PanK-III</fullName>
    </alternativeName>
    <alternativeName>
        <fullName evidence="1">Pantothenic acid kinase</fullName>
    </alternativeName>
</protein>
<sequence>MNLIIDIGNSVAKLAIFDKGELVEVFRGSNHSLDCLPMLCSRYPLKRGIIASVITLSNTIRHQLERLPFNIIELSHETPVPVTNLYKTPQTLGMDRLAAVVAANWLKPGHDVLVIDAGTCVTYDFIDADGAYHGGNISPGMRMRFKALNIFTDKLPKVSAKGEVPMYGQSTETAIRAGVIRGMEFEMSGYITHLQKNYPELLVFLTGGDEFSFDTKLKSIIFADRFLVLKGLNRILSYNDKL</sequence>
<accession>A6L3F8</accession>
<organism>
    <name type="scientific">Phocaeicola vulgatus (strain ATCC 8482 / DSM 1447 / JCM 5826 / CCUG 4940 / NBRC 14291 / NCTC 11154)</name>
    <name type="common">Bacteroides vulgatus</name>
    <dbReference type="NCBI Taxonomy" id="435590"/>
    <lineage>
        <taxon>Bacteria</taxon>
        <taxon>Pseudomonadati</taxon>
        <taxon>Bacteroidota</taxon>
        <taxon>Bacteroidia</taxon>
        <taxon>Bacteroidales</taxon>
        <taxon>Bacteroidaceae</taxon>
        <taxon>Phocaeicola</taxon>
    </lineage>
</organism>
<proteinExistence type="inferred from homology"/>
<name>COAX_PHOV8</name>
<dbReference type="EC" id="2.7.1.33" evidence="1"/>
<dbReference type="EMBL" id="CP000139">
    <property type="protein sequence ID" value="ABR40222.1"/>
    <property type="molecule type" value="Genomic_DNA"/>
</dbReference>
<dbReference type="RefSeq" id="WP_005847258.1">
    <property type="nucleotide sequence ID" value="NZ_JANSWM010000107.1"/>
</dbReference>
<dbReference type="SMR" id="A6L3F8"/>
<dbReference type="STRING" id="435590.BVU_2565"/>
<dbReference type="PaxDb" id="435590-BVU_2565"/>
<dbReference type="GeneID" id="5303529"/>
<dbReference type="KEGG" id="bvu:BVU_2565"/>
<dbReference type="eggNOG" id="COG1521">
    <property type="taxonomic scope" value="Bacteria"/>
</dbReference>
<dbReference type="HOGENOM" id="CLU_066627_2_0_10"/>
<dbReference type="BioCyc" id="BVUL435590:G1G59-2669-MONOMER"/>
<dbReference type="UniPathway" id="UPA00241">
    <property type="reaction ID" value="UER00352"/>
</dbReference>
<dbReference type="Proteomes" id="UP000002861">
    <property type="component" value="Chromosome"/>
</dbReference>
<dbReference type="GO" id="GO:0005737">
    <property type="term" value="C:cytoplasm"/>
    <property type="evidence" value="ECO:0007669"/>
    <property type="project" value="UniProtKB-SubCell"/>
</dbReference>
<dbReference type="GO" id="GO:0005524">
    <property type="term" value="F:ATP binding"/>
    <property type="evidence" value="ECO:0007669"/>
    <property type="project" value="UniProtKB-UniRule"/>
</dbReference>
<dbReference type="GO" id="GO:0046872">
    <property type="term" value="F:metal ion binding"/>
    <property type="evidence" value="ECO:0007669"/>
    <property type="project" value="UniProtKB-KW"/>
</dbReference>
<dbReference type="GO" id="GO:0004594">
    <property type="term" value="F:pantothenate kinase activity"/>
    <property type="evidence" value="ECO:0007669"/>
    <property type="project" value="UniProtKB-UniRule"/>
</dbReference>
<dbReference type="GO" id="GO:0015937">
    <property type="term" value="P:coenzyme A biosynthetic process"/>
    <property type="evidence" value="ECO:0007669"/>
    <property type="project" value="UniProtKB-UniRule"/>
</dbReference>
<dbReference type="CDD" id="cd24015">
    <property type="entry name" value="ASKHA_NBD_PanK-III"/>
    <property type="match status" value="1"/>
</dbReference>
<dbReference type="Gene3D" id="3.30.420.40">
    <property type="match status" value="1"/>
</dbReference>
<dbReference type="HAMAP" id="MF_01274">
    <property type="entry name" value="Pantothen_kinase_3"/>
    <property type="match status" value="1"/>
</dbReference>
<dbReference type="InterPro" id="IPR043129">
    <property type="entry name" value="ATPase_NBD"/>
</dbReference>
<dbReference type="InterPro" id="IPR004619">
    <property type="entry name" value="Type_III_PanK"/>
</dbReference>
<dbReference type="NCBIfam" id="TIGR00671">
    <property type="entry name" value="baf"/>
    <property type="match status" value="1"/>
</dbReference>
<dbReference type="NCBIfam" id="NF009854">
    <property type="entry name" value="PRK13320.1-6"/>
    <property type="match status" value="1"/>
</dbReference>
<dbReference type="PANTHER" id="PTHR34265">
    <property type="entry name" value="TYPE III PANTOTHENATE KINASE"/>
    <property type="match status" value="1"/>
</dbReference>
<dbReference type="PANTHER" id="PTHR34265:SF1">
    <property type="entry name" value="TYPE III PANTOTHENATE KINASE"/>
    <property type="match status" value="1"/>
</dbReference>
<dbReference type="Pfam" id="PF03309">
    <property type="entry name" value="Pan_kinase"/>
    <property type="match status" value="1"/>
</dbReference>
<dbReference type="SUPFAM" id="SSF53067">
    <property type="entry name" value="Actin-like ATPase domain"/>
    <property type="match status" value="2"/>
</dbReference>
<evidence type="ECO:0000255" key="1">
    <source>
        <dbReference type="HAMAP-Rule" id="MF_01274"/>
    </source>
</evidence>
<reference key="1">
    <citation type="journal article" date="2007" name="PLoS Biol.">
        <title>Evolution of symbiotic bacteria in the distal human intestine.</title>
        <authorList>
            <person name="Xu J."/>
            <person name="Mahowald M.A."/>
            <person name="Ley R.E."/>
            <person name="Lozupone C.A."/>
            <person name="Hamady M."/>
            <person name="Martens E.C."/>
            <person name="Henrissat B."/>
            <person name="Coutinho P.M."/>
            <person name="Minx P."/>
            <person name="Latreille P."/>
            <person name="Cordum H."/>
            <person name="Van Brunt A."/>
            <person name="Kim K."/>
            <person name="Fulton R.S."/>
            <person name="Fulton L.A."/>
            <person name="Clifton S.W."/>
            <person name="Wilson R.K."/>
            <person name="Knight R.D."/>
            <person name="Gordon J.I."/>
        </authorList>
    </citation>
    <scope>NUCLEOTIDE SEQUENCE [LARGE SCALE GENOMIC DNA]</scope>
    <source>
        <strain>ATCC 8482 / DSM 1447 / JCM 5826 / CCUG 4940 / NBRC 14291 / NCTC 11154</strain>
    </source>
</reference>
<comment type="function">
    <text evidence="1">Catalyzes the phosphorylation of pantothenate (Pan), the first step in CoA biosynthesis.</text>
</comment>
<comment type="catalytic activity">
    <reaction evidence="1">
        <text>(R)-pantothenate + ATP = (R)-4'-phosphopantothenate + ADP + H(+)</text>
        <dbReference type="Rhea" id="RHEA:16373"/>
        <dbReference type="ChEBI" id="CHEBI:10986"/>
        <dbReference type="ChEBI" id="CHEBI:15378"/>
        <dbReference type="ChEBI" id="CHEBI:29032"/>
        <dbReference type="ChEBI" id="CHEBI:30616"/>
        <dbReference type="ChEBI" id="CHEBI:456216"/>
        <dbReference type="EC" id="2.7.1.33"/>
    </reaction>
</comment>
<comment type="cofactor">
    <cofactor evidence="1">
        <name>NH4(+)</name>
        <dbReference type="ChEBI" id="CHEBI:28938"/>
    </cofactor>
    <cofactor evidence="1">
        <name>K(+)</name>
        <dbReference type="ChEBI" id="CHEBI:29103"/>
    </cofactor>
    <text evidence="1">A monovalent cation. Ammonium or potassium.</text>
</comment>
<comment type="pathway">
    <text evidence="1">Cofactor biosynthesis; coenzyme A biosynthesis; CoA from (R)-pantothenate: step 1/5.</text>
</comment>
<comment type="subunit">
    <text evidence="1">Homodimer.</text>
</comment>
<comment type="subcellular location">
    <subcellularLocation>
        <location evidence="1">Cytoplasm</location>
    </subcellularLocation>
</comment>
<comment type="similarity">
    <text evidence="1">Belongs to the type III pantothenate kinase family.</text>
</comment>